<gene>
    <name evidence="1" type="primary">hfq</name>
    <name type="ordered locus">VV3071</name>
</gene>
<accession>Q7MH02</accession>
<organism>
    <name type="scientific">Vibrio vulnificus (strain YJ016)</name>
    <dbReference type="NCBI Taxonomy" id="196600"/>
    <lineage>
        <taxon>Bacteria</taxon>
        <taxon>Pseudomonadati</taxon>
        <taxon>Pseudomonadota</taxon>
        <taxon>Gammaproteobacteria</taxon>
        <taxon>Vibrionales</taxon>
        <taxon>Vibrionaceae</taxon>
        <taxon>Vibrio</taxon>
    </lineage>
</organism>
<reference key="1">
    <citation type="journal article" date="2003" name="Genome Res.">
        <title>Comparative genome analysis of Vibrio vulnificus, a marine pathogen.</title>
        <authorList>
            <person name="Chen C.-Y."/>
            <person name="Wu K.-M."/>
            <person name="Chang Y.-C."/>
            <person name="Chang C.-H."/>
            <person name="Tsai H.-C."/>
            <person name="Liao T.-L."/>
            <person name="Liu Y.-M."/>
            <person name="Chen H.-J."/>
            <person name="Shen A.B.-T."/>
            <person name="Li J.-C."/>
            <person name="Su T.-L."/>
            <person name="Shao C.-P."/>
            <person name="Lee C.-T."/>
            <person name="Hor L.-I."/>
            <person name="Tsai S.-F."/>
        </authorList>
    </citation>
    <scope>NUCLEOTIDE SEQUENCE [LARGE SCALE GENOMIC DNA]</scope>
    <source>
        <strain>YJ016</strain>
    </source>
</reference>
<sequence>MAKGQSLQDPFLNALRRERIPVSIYLVNGIKLQGQIESFDQFVILLKNTVNQMVYKHAISTVVPARPVSHHSGERGSDRPSEKSED</sequence>
<keyword id="KW-0694">RNA-binding</keyword>
<keyword id="KW-0346">Stress response</keyword>
<protein>
    <recommendedName>
        <fullName evidence="1">RNA-binding protein Hfq</fullName>
    </recommendedName>
</protein>
<comment type="function">
    <text evidence="1">RNA chaperone that binds small regulatory RNA (sRNAs) and mRNAs to facilitate mRNA translational regulation in response to envelope stress, environmental stress and changes in metabolite concentrations. Also binds with high specificity to tRNAs.</text>
</comment>
<comment type="subunit">
    <text evidence="1">Homohexamer.</text>
</comment>
<comment type="similarity">
    <text evidence="1">Belongs to the Hfq family.</text>
</comment>
<proteinExistence type="inferred from homology"/>
<name>HFQ_VIBVY</name>
<dbReference type="EMBL" id="BA000037">
    <property type="protein sequence ID" value="BAC95835.1"/>
    <property type="molecule type" value="Genomic_DNA"/>
</dbReference>
<dbReference type="RefSeq" id="WP_011079276.1">
    <property type="nucleotide sequence ID" value="NC_005139.1"/>
</dbReference>
<dbReference type="SMR" id="Q7MH02"/>
<dbReference type="STRING" id="672.VV93_v1c27990"/>
<dbReference type="GeneID" id="93895565"/>
<dbReference type="KEGG" id="vvy:VV3071"/>
<dbReference type="eggNOG" id="COG1923">
    <property type="taxonomic scope" value="Bacteria"/>
</dbReference>
<dbReference type="HOGENOM" id="CLU_113688_2_2_6"/>
<dbReference type="Proteomes" id="UP000002675">
    <property type="component" value="Chromosome I"/>
</dbReference>
<dbReference type="GO" id="GO:0005829">
    <property type="term" value="C:cytosol"/>
    <property type="evidence" value="ECO:0007669"/>
    <property type="project" value="TreeGrafter"/>
</dbReference>
<dbReference type="GO" id="GO:0003723">
    <property type="term" value="F:RNA binding"/>
    <property type="evidence" value="ECO:0007669"/>
    <property type="project" value="UniProtKB-UniRule"/>
</dbReference>
<dbReference type="GO" id="GO:0006355">
    <property type="term" value="P:regulation of DNA-templated transcription"/>
    <property type="evidence" value="ECO:0007669"/>
    <property type="project" value="InterPro"/>
</dbReference>
<dbReference type="GO" id="GO:0043487">
    <property type="term" value="P:regulation of RNA stability"/>
    <property type="evidence" value="ECO:0007669"/>
    <property type="project" value="TreeGrafter"/>
</dbReference>
<dbReference type="GO" id="GO:0045974">
    <property type="term" value="P:regulation of translation, ncRNA-mediated"/>
    <property type="evidence" value="ECO:0007669"/>
    <property type="project" value="TreeGrafter"/>
</dbReference>
<dbReference type="CDD" id="cd01716">
    <property type="entry name" value="Hfq"/>
    <property type="match status" value="1"/>
</dbReference>
<dbReference type="FunFam" id="2.30.30.100:FF:000001">
    <property type="entry name" value="RNA-binding protein Hfq"/>
    <property type="match status" value="1"/>
</dbReference>
<dbReference type="Gene3D" id="2.30.30.100">
    <property type="match status" value="1"/>
</dbReference>
<dbReference type="HAMAP" id="MF_00436">
    <property type="entry name" value="Hfq"/>
    <property type="match status" value="1"/>
</dbReference>
<dbReference type="InterPro" id="IPR005001">
    <property type="entry name" value="Hfq"/>
</dbReference>
<dbReference type="InterPro" id="IPR010920">
    <property type="entry name" value="LSM_dom_sf"/>
</dbReference>
<dbReference type="InterPro" id="IPR047575">
    <property type="entry name" value="Sm"/>
</dbReference>
<dbReference type="NCBIfam" id="TIGR02383">
    <property type="entry name" value="Hfq"/>
    <property type="match status" value="1"/>
</dbReference>
<dbReference type="NCBIfam" id="NF001602">
    <property type="entry name" value="PRK00395.1"/>
    <property type="match status" value="1"/>
</dbReference>
<dbReference type="PANTHER" id="PTHR34772">
    <property type="entry name" value="RNA-BINDING PROTEIN HFQ"/>
    <property type="match status" value="1"/>
</dbReference>
<dbReference type="PANTHER" id="PTHR34772:SF1">
    <property type="entry name" value="RNA-BINDING PROTEIN HFQ"/>
    <property type="match status" value="1"/>
</dbReference>
<dbReference type="Pfam" id="PF17209">
    <property type="entry name" value="Hfq"/>
    <property type="match status" value="1"/>
</dbReference>
<dbReference type="SUPFAM" id="SSF50182">
    <property type="entry name" value="Sm-like ribonucleoproteins"/>
    <property type="match status" value="1"/>
</dbReference>
<dbReference type="PROSITE" id="PS52002">
    <property type="entry name" value="SM"/>
    <property type="match status" value="1"/>
</dbReference>
<evidence type="ECO:0000255" key="1">
    <source>
        <dbReference type="HAMAP-Rule" id="MF_00436"/>
    </source>
</evidence>
<evidence type="ECO:0000255" key="2">
    <source>
        <dbReference type="PROSITE-ProRule" id="PRU01346"/>
    </source>
</evidence>
<evidence type="ECO:0000256" key="3">
    <source>
        <dbReference type="SAM" id="MobiDB-lite"/>
    </source>
</evidence>
<feature type="chain" id="PRO_0000095669" description="RNA-binding protein Hfq">
    <location>
        <begin position="1"/>
        <end position="86"/>
    </location>
</feature>
<feature type="domain" description="Sm" evidence="2">
    <location>
        <begin position="9"/>
        <end position="68"/>
    </location>
</feature>
<feature type="region of interest" description="Disordered" evidence="3">
    <location>
        <begin position="65"/>
        <end position="86"/>
    </location>
</feature>
<feature type="compositionally biased region" description="Basic and acidic residues" evidence="3">
    <location>
        <begin position="71"/>
        <end position="86"/>
    </location>
</feature>